<comment type="function">
    <text evidence="2">Component of the large ribosomal subunit. The ribosome is a large ribonucleoprotein complex responsible for the synthesis of proteins in the cell.</text>
</comment>
<comment type="subunit">
    <text evidence="2">Component of the large ribosomal subunit.</text>
</comment>
<comment type="subcellular location">
    <subcellularLocation>
        <location evidence="2">Cytoplasm</location>
        <location evidence="2">Cytosol</location>
    </subcellularLocation>
    <subcellularLocation>
        <location evidence="2">Cytoplasm</location>
    </subcellularLocation>
    <text evidence="1 2">Detected on cytosolic polysomes.</text>
</comment>
<comment type="similarity">
    <text evidence="3">Belongs to the eukaryotic ribosomal protein eL36 family.</text>
</comment>
<feature type="chain" id="PRO_0000318979" description="Large ribosomal subunit protein eL36">
    <location>
        <begin position="1"/>
        <end position="105"/>
    </location>
</feature>
<organism>
    <name type="scientific">Gallus gallus</name>
    <name type="common">Chicken</name>
    <dbReference type="NCBI Taxonomy" id="9031"/>
    <lineage>
        <taxon>Eukaryota</taxon>
        <taxon>Metazoa</taxon>
        <taxon>Chordata</taxon>
        <taxon>Craniata</taxon>
        <taxon>Vertebrata</taxon>
        <taxon>Euteleostomi</taxon>
        <taxon>Archelosauria</taxon>
        <taxon>Archosauria</taxon>
        <taxon>Dinosauria</taxon>
        <taxon>Saurischia</taxon>
        <taxon>Theropoda</taxon>
        <taxon>Coelurosauria</taxon>
        <taxon>Aves</taxon>
        <taxon>Neognathae</taxon>
        <taxon>Galloanserae</taxon>
        <taxon>Galliformes</taxon>
        <taxon>Phasianidae</taxon>
        <taxon>Phasianinae</taxon>
        <taxon>Gallus</taxon>
    </lineage>
</organism>
<evidence type="ECO:0000250" key="1">
    <source>
        <dbReference type="UniProtKB" id="Q2YGT9"/>
    </source>
</evidence>
<evidence type="ECO:0000250" key="2">
    <source>
        <dbReference type="UniProtKB" id="Q9Y3U8"/>
    </source>
</evidence>
<evidence type="ECO:0000305" key="3"/>
<dbReference type="EMBL" id="AB046396">
    <property type="protein sequence ID" value="BAB21249.1"/>
    <property type="molecule type" value="mRNA"/>
</dbReference>
<dbReference type="RefSeq" id="NP_989471.1">
    <property type="nucleotide sequence ID" value="NM_204140.2"/>
</dbReference>
<dbReference type="RefSeq" id="XP_015155148.1">
    <property type="nucleotide sequence ID" value="XM_015299662.4"/>
</dbReference>
<dbReference type="RefSeq" id="XP_046789572.1">
    <property type="nucleotide sequence ID" value="XM_046933616.1"/>
</dbReference>
<dbReference type="PDB" id="8Q7Z">
    <property type="method" value="EM"/>
    <property type="resolution" value="2.50 A"/>
    <property type="chains" value="Bi=1-105"/>
</dbReference>
<dbReference type="PDB" id="8Q87">
    <property type="method" value="EM"/>
    <property type="resolution" value="2.40 A"/>
    <property type="chains" value="Bi=1-105"/>
</dbReference>
<dbReference type="PDBsum" id="8Q7Z"/>
<dbReference type="PDBsum" id="8Q87"/>
<dbReference type="SMR" id="Q98TF6"/>
<dbReference type="BioGRID" id="674986">
    <property type="interactions" value="1"/>
</dbReference>
<dbReference type="FunCoup" id="Q98TF6">
    <property type="interactions" value="1546"/>
</dbReference>
<dbReference type="STRING" id="9031.ENSGALP00000059330"/>
<dbReference type="PaxDb" id="9031-ENSGALP00000000643"/>
<dbReference type="Ensembl" id="ENSGALT00010066888.1">
    <property type="protein sequence ID" value="ENSGALP00010040919.1"/>
    <property type="gene ID" value="ENSGALG00010027609.1"/>
</dbReference>
<dbReference type="GeneID" id="373936"/>
<dbReference type="KEGG" id="gga:373936"/>
<dbReference type="CTD" id="25873"/>
<dbReference type="VEuPathDB" id="HostDB:geneid_373936"/>
<dbReference type="eggNOG" id="KOG3452">
    <property type="taxonomic scope" value="Eukaryota"/>
</dbReference>
<dbReference type="GeneTree" id="ENSGT00390000011943"/>
<dbReference type="HOGENOM" id="CLU_140672_2_2_1"/>
<dbReference type="InParanoid" id="Q98TF6"/>
<dbReference type="OMA" id="NKGHKTE"/>
<dbReference type="OrthoDB" id="9616667at2759"/>
<dbReference type="PhylomeDB" id="Q98TF6"/>
<dbReference type="Reactome" id="R-GGA-1799339">
    <property type="pathway name" value="SRP-dependent cotranslational protein targeting to membrane"/>
</dbReference>
<dbReference type="Reactome" id="R-GGA-72689">
    <property type="pathway name" value="Formation of a pool of free 40S subunits"/>
</dbReference>
<dbReference type="Reactome" id="R-GGA-72706">
    <property type="pathway name" value="GTP hydrolysis and joining of the 60S ribosomal subunit"/>
</dbReference>
<dbReference type="Reactome" id="R-GGA-975956">
    <property type="pathway name" value="Nonsense Mediated Decay (NMD) independent of the Exon Junction Complex (EJC)"/>
</dbReference>
<dbReference type="Reactome" id="R-GGA-975957">
    <property type="pathway name" value="Nonsense Mediated Decay (NMD) enhanced by the Exon Junction Complex (EJC)"/>
</dbReference>
<dbReference type="PRO" id="PR:Q98TF6"/>
<dbReference type="Proteomes" id="UP000000539">
    <property type="component" value="Chromosome 28"/>
</dbReference>
<dbReference type="Bgee" id="ENSGALG00000000474">
    <property type="expression patterns" value="Expressed in spermatid and 13 other cell types or tissues"/>
</dbReference>
<dbReference type="GO" id="GO:0022625">
    <property type="term" value="C:cytosolic large ribosomal subunit"/>
    <property type="evidence" value="ECO:0000318"/>
    <property type="project" value="GO_Central"/>
</dbReference>
<dbReference type="GO" id="GO:0003735">
    <property type="term" value="F:structural constituent of ribosome"/>
    <property type="evidence" value="ECO:0000318"/>
    <property type="project" value="GO_Central"/>
</dbReference>
<dbReference type="GO" id="GO:0002181">
    <property type="term" value="P:cytoplasmic translation"/>
    <property type="evidence" value="ECO:0000318"/>
    <property type="project" value="GO_Central"/>
</dbReference>
<dbReference type="FunFam" id="1.10.10.1760:FF:000002">
    <property type="entry name" value="60S ribosomal protein L36"/>
    <property type="match status" value="1"/>
</dbReference>
<dbReference type="Gene3D" id="1.10.10.1760">
    <property type="entry name" value="60S ribosomal protein L36"/>
    <property type="match status" value="1"/>
</dbReference>
<dbReference type="InterPro" id="IPR000509">
    <property type="entry name" value="Ribosomal_eL36"/>
</dbReference>
<dbReference type="InterPro" id="IPR038097">
    <property type="entry name" value="Ribosomal_eL36_sf"/>
</dbReference>
<dbReference type="PANTHER" id="PTHR10114">
    <property type="entry name" value="60S RIBOSOMAL PROTEIN L36"/>
    <property type="match status" value="1"/>
</dbReference>
<dbReference type="Pfam" id="PF01158">
    <property type="entry name" value="Ribosomal_L36e"/>
    <property type="match status" value="1"/>
</dbReference>
<dbReference type="PROSITE" id="PS01190">
    <property type="entry name" value="RIBOSOMAL_L36E"/>
    <property type="match status" value="1"/>
</dbReference>
<proteinExistence type="evidence at protein level"/>
<protein>
    <recommendedName>
        <fullName evidence="3">Large ribosomal subunit protein eL36</fullName>
    </recommendedName>
    <alternativeName>
        <fullName>60S ribosomal protein L36</fullName>
    </alternativeName>
</protein>
<name>RL36_CHICK</name>
<keyword id="KW-0002">3D-structure</keyword>
<keyword id="KW-0963">Cytoplasm</keyword>
<keyword id="KW-1185">Reference proteome</keyword>
<keyword id="KW-0687">Ribonucleoprotein</keyword>
<keyword id="KW-0689">Ribosomal protein</keyword>
<gene>
    <name type="primary">RPL36</name>
</gene>
<reference key="1">
    <citation type="journal article" date="2001" name="Genomics">
        <title>A complete map of the human ribosomal protein genes: assignment of 80 genes to the cytogenetic map and implications for human disorders.</title>
        <authorList>
            <person name="Uechi T."/>
            <person name="Tanaka T."/>
            <person name="Kenmochi N."/>
        </authorList>
    </citation>
    <scope>NUCLEOTIDE SEQUENCE [MRNA]</scope>
    <source>
        <tissue>Liver</tissue>
    </source>
</reference>
<sequence>MAIRYPMAVGLNKGYKVTKNVSKPRHCRRRGRLTKHTKFVRDMIREVCGFAPYERRAMELLKVSKDKRALKFIKKRVGTHIRAKRKREELSNVLAAMRKAAAKKD</sequence>
<accession>Q98TF6</accession>